<name>DNAK_METC4</name>
<sequence>MGKVIGIDLGTTNSCVAVMEGTQPRVIENAEGARTTPSIVAFTDDGERLVGQPAKRQAVTNPERTFFAIKRLIGRTYDDPLTQKDKGLVPYKIARGDNGDAWVEADGKKYSPSQISAFTLQKMKETAESHLGQPVTQAVITVPAYFNDAQRQATKDAGKIAGLEVLRIINEPTAAALAYGLDKKKAGTIAVYDLGGGTFDVSILEIGDGVFEVKSTNGDTFLGGEDFDNRVVEYLTAEFKKEQGIDLTKDKLALQRLKEAAEKAKIELSSATQTEINLPYITADASGPKHLALKLSRAKFESLVDDLVQRTIEPCRKALKDAGVSASEIDEVVLVGGQTRMPKVQEVVKAFFGKEPHKGVNPDEVVAIGAAVQAGVLQGDVKDVLLLDVTPLSLGIETLGGVFTRLIDRNTTIPTKKSQVFSTAEDNQNAVTIRVFQGEREMAADNKLLGQFDLVGIPPAPRGMPQIEVTFDIDANGIVNVTAKDKATNKEHQIRIQASGGLSDADIEKMVKDAEANAEADKKRRELVEVKNQGESLIHATEKSVAEYGDKVSAADKGAIESAITALRSALEGEDAEGIKAKTNDLMQASMKLGEAMYAASQTEGAPGADGAASTDEKKDDVIDADFQEVDENERKKRA</sequence>
<protein>
    <recommendedName>
        <fullName evidence="1">Chaperone protein DnaK</fullName>
    </recommendedName>
    <alternativeName>
        <fullName evidence="1">HSP70</fullName>
    </alternativeName>
    <alternativeName>
        <fullName evidence="1">Heat shock 70 kDa protein</fullName>
    </alternativeName>
    <alternativeName>
        <fullName evidence="1">Heat shock protein 70</fullName>
    </alternativeName>
</protein>
<organism>
    <name type="scientific">Methylorubrum extorquens (strain CM4 / NCIMB 13688)</name>
    <name type="common">Methylobacterium extorquens</name>
    <dbReference type="NCBI Taxonomy" id="440085"/>
    <lineage>
        <taxon>Bacteria</taxon>
        <taxon>Pseudomonadati</taxon>
        <taxon>Pseudomonadota</taxon>
        <taxon>Alphaproteobacteria</taxon>
        <taxon>Hyphomicrobiales</taxon>
        <taxon>Methylobacteriaceae</taxon>
        <taxon>Methylorubrum</taxon>
    </lineage>
</organism>
<proteinExistence type="inferred from homology"/>
<reference key="1">
    <citation type="submission" date="2008-12" db="EMBL/GenBank/DDBJ databases">
        <title>Complete sequence of chromosome of Methylobacterium chloromethanicum CM4.</title>
        <authorList>
            <consortium name="US DOE Joint Genome Institute"/>
            <person name="Lucas S."/>
            <person name="Copeland A."/>
            <person name="Lapidus A."/>
            <person name="Glavina del Rio T."/>
            <person name="Dalin E."/>
            <person name="Tice H."/>
            <person name="Bruce D."/>
            <person name="Goodwin L."/>
            <person name="Pitluck S."/>
            <person name="Chertkov O."/>
            <person name="Brettin T."/>
            <person name="Detter J.C."/>
            <person name="Han C."/>
            <person name="Larimer F."/>
            <person name="Land M."/>
            <person name="Hauser L."/>
            <person name="Kyrpides N."/>
            <person name="Mikhailova N."/>
            <person name="Marx C."/>
            <person name="Richardson P."/>
        </authorList>
    </citation>
    <scope>NUCLEOTIDE SEQUENCE [LARGE SCALE GENOMIC DNA]</scope>
    <source>
        <strain>CM4 / NCIMB 13688</strain>
    </source>
</reference>
<feature type="chain" id="PRO_1000133152" description="Chaperone protein DnaK">
    <location>
        <begin position="1"/>
        <end position="639"/>
    </location>
</feature>
<feature type="region of interest" description="Disordered" evidence="2">
    <location>
        <begin position="598"/>
        <end position="639"/>
    </location>
</feature>
<feature type="compositionally biased region" description="Acidic residues" evidence="2">
    <location>
        <begin position="623"/>
        <end position="632"/>
    </location>
</feature>
<feature type="modified residue" description="Phosphothreonine; by autocatalysis" evidence="1">
    <location>
        <position position="198"/>
    </location>
</feature>
<dbReference type="EMBL" id="CP001298">
    <property type="protein sequence ID" value="ACK84024.1"/>
    <property type="molecule type" value="Genomic_DNA"/>
</dbReference>
<dbReference type="RefSeq" id="WP_015823233.1">
    <property type="nucleotide sequence ID" value="NC_011757.1"/>
</dbReference>
<dbReference type="SMR" id="B7KSZ4"/>
<dbReference type="GeneID" id="72990605"/>
<dbReference type="KEGG" id="mch:Mchl_3186"/>
<dbReference type="HOGENOM" id="CLU_005965_2_1_5"/>
<dbReference type="Proteomes" id="UP000002385">
    <property type="component" value="Chromosome"/>
</dbReference>
<dbReference type="GO" id="GO:0005524">
    <property type="term" value="F:ATP binding"/>
    <property type="evidence" value="ECO:0007669"/>
    <property type="project" value="UniProtKB-UniRule"/>
</dbReference>
<dbReference type="GO" id="GO:0140662">
    <property type="term" value="F:ATP-dependent protein folding chaperone"/>
    <property type="evidence" value="ECO:0007669"/>
    <property type="project" value="InterPro"/>
</dbReference>
<dbReference type="GO" id="GO:0051082">
    <property type="term" value="F:unfolded protein binding"/>
    <property type="evidence" value="ECO:0007669"/>
    <property type="project" value="InterPro"/>
</dbReference>
<dbReference type="CDD" id="cd11733">
    <property type="entry name" value="ASKHA_NBD_HSP70_HSPA9"/>
    <property type="match status" value="1"/>
</dbReference>
<dbReference type="FunFam" id="2.60.34.10:FF:000014">
    <property type="entry name" value="Chaperone protein DnaK HSP70"/>
    <property type="match status" value="1"/>
</dbReference>
<dbReference type="FunFam" id="3.30.420.40:FF:000020">
    <property type="entry name" value="Chaperone protein HscA homolog"/>
    <property type="match status" value="1"/>
</dbReference>
<dbReference type="FunFam" id="3.30.30.30:FF:000003">
    <property type="entry name" value="Heat shock protein 9"/>
    <property type="match status" value="1"/>
</dbReference>
<dbReference type="FunFam" id="1.20.1270.10:FF:000001">
    <property type="entry name" value="Molecular chaperone DnaK"/>
    <property type="match status" value="1"/>
</dbReference>
<dbReference type="FunFam" id="3.30.420.40:FF:000004">
    <property type="entry name" value="Molecular chaperone DnaK"/>
    <property type="match status" value="1"/>
</dbReference>
<dbReference type="FunFam" id="3.90.640.10:FF:000003">
    <property type="entry name" value="Molecular chaperone DnaK"/>
    <property type="match status" value="1"/>
</dbReference>
<dbReference type="Gene3D" id="1.20.1270.10">
    <property type="match status" value="1"/>
</dbReference>
<dbReference type="Gene3D" id="3.30.420.40">
    <property type="match status" value="2"/>
</dbReference>
<dbReference type="Gene3D" id="3.90.640.10">
    <property type="entry name" value="Actin, Chain A, domain 4"/>
    <property type="match status" value="1"/>
</dbReference>
<dbReference type="Gene3D" id="2.60.34.10">
    <property type="entry name" value="Substrate Binding Domain Of DNAk, Chain A, domain 1"/>
    <property type="match status" value="1"/>
</dbReference>
<dbReference type="HAMAP" id="MF_00332">
    <property type="entry name" value="DnaK"/>
    <property type="match status" value="1"/>
</dbReference>
<dbReference type="InterPro" id="IPR043129">
    <property type="entry name" value="ATPase_NBD"/>
</dbReference>
<dbReference type="InterPro" id="IPR012725">
    <property type="entry name" value="Chaperone_DnaK"/>
</dbReference>
<dbReference type="InterPro" id="IPR018181">
    <property type="entry name" value="Heat_shock_70_CS"/>
</dbReference>
<dbReference type="InterPro" id="IPR029048">
    <property type="entry name" value="HSP70_C_sf"/>
</dbReference>
<dbReference type="InterPro" id="IPR029047">
    <property type="entry name" value="HSP70_peptide-bd_sf"/>
</dbReference>
<dbReference type="InterPro" id="IPR013126">
    <property type="entry name" value="Hsp_70_fam"/>
</dbReference>
<dbReference type="NCBIfam" id="NF001413">
    <property type="entry name" value="PRK00290.1"/>
    <property type="match status" value="1"/>
</dbReference>
<dbReference type="NCBIfam" id="NF003520">
    <property type="entry name" value="PRK05183.1"/>
    <property type="match status" value="1"/>
</dbReference>
<dbReference type="NCBIfam" id="TIGR02350">
    <property type="entry name" value="prok_dnaK"/>
    <property type="match status" value="1"/>
</dbReference>
<dbReference type="PANTHER" id="PTHR19375">
    <property type="entry name" value="HEAT SHOCK PROTEIN 70KDA"/>
    <property type="match status" value="1"/>
</dbReference>
<dbReference type="Pfam" id="PF00012">
    <property type="entry name" value="HSP70"/>
    <property type="match status" value="1"/>
</dbReference>
<dbReference type="PRINTS" id="PR00301">
    <property type="entry name" value="HEATSHOCK70"/>
</dbReference>
<dbReference type="SUPFAM" id="SSF53067">
    <property type="entry name" value="Actin-like ATPase domain"/>
    <property type="match status" value="2"/>
</dbReference>
<dbReference type="SUPFAM" id="SSF100934">
    <property type="entry name" value="Heat shock protein 70kD (HSP70), C-terminal subdomain"/>
    <property type="match status" value="1"/>
</dbReference>
<dbReference type="SUPFAM" id="SSF100920">
    <property type="entry name" value="Heat shock protein 70kD (HSP70), peptide-binding domain"/>
    <property type="match status" value="1"/>
</dbReference>
<dbReference type="PROSITE" id="PS00297">
    <property type="entry name" value="HSP70_1"/>
    <property type="match status" value="1"/>
</dbReference>
<dbReference type="PROSITE" id="PS00329">
    <property type="entry name" value="HSP70_2"/>
    <property type="match status" value="1"/>
</dbReference>
<dbReference type="PROSITE" id="PS01036">
    <property type="entry name" value="HSP70_3"/>
    <property type="match status" value="1"/>
</dbReference>
<gene>
    <name evidence="1" type="primary">dnaK</name>
    <name type="ordered locus">Mchl_3186</name>
</gene>
<accession>B7KSZ4</accession>
<evidence type="ECO:0000255" key="1">
    <source>
        <dbReference type="HAMAP-Rule" id="MF_00332"/>
    </source>
</evidence>
<evidence type="ECO:0000256" key="2">
    <source>
        <dbReference type="SAM" id="MobiDB-lite"/>
    </source>
</evidence>
<keyword id="KW-0067">ATP-binding</keyword>
<keyword id="KW-0143">Chaperone</keyword>
<keyword id="KW-0547">Nucleotide-binding</keyword>
<keyword id="KW-0597">Phosphoprotein</keyword>
<keyword id="KW-0346">Stress response</keyword>
<comment type="function">
    <text evidence="1">Acts as a chaperone.</text>
</comment>
<comment type="induction">
    <text evidence="1">By stress conditions e.g. heat shock.</text>
</comment>
<comment type="similarity">
    <text evidence="1">Belongs to the heat shock protein 70 family.</text>
</comment>